<name>Y2698_CHLAA</name>
<sequence>MPTPKRRLGEVGEQAAAAYLERCGYTIIARNWRCRDGEIDLVAREGDQIVFVEVRTRHDQHALETITLAKQQRLVALAYHYLSAHDLPATTRWRIDVIALTARGGRIVDYDHVIAAVGED</sequence>
<proteinExistence type="inferred from homology"/>
<gene>
    <name type="ordered locus">Caur_2698</name>
</gene>
<accession>A9WJJ9</accession>
<comment type="similarity">
    <text evidence="1">Belongs to the UPF0102 family.</text>
</comment>
<keyword id="KW-1185">Reference proteome</keyword>
<protein>
    <recommendedName>
        <fullName evidence="1">UPF0102 protein Caur_2698</fullName>
    </recommendedName>
</protein>
<feature type="chain" id="PRO_1000074806" description="UPF0102 protein Caur_2698">
    <location>
        <begin position="1"/>
        <end position="120"/>
    </location>
</feature>
<dbReference type="EMBL" id="CP000909">
    <property type="protein sequence ID" value="ABY35903.1"/>
    <property type="molecule type" value="Genomic_DNA"/>
</dbReference>
<dbReference type="RefSeq" id="WP_012258556.1">
    <property type="nucleotide sequence ID" value="NC_010175.1"/>
</dbReference>
<dbReference type="RefSeq" id="YP_001636292.1">
    <property type="nucleotide sequence ID" value="NC_010175.1"/>
</dbReference>
<dbReference type="SMR" id="A9WJJ9"/>
<dbReference type="STRING" id="324602.Caur_2698"/>
<dbReference type="EnsemblBacteria" id="ABY35903">
    <property type="protein sequence ID" value="ABY35903"/>
    <property type="gene ID" value="Caur_2698"/>
</dbReference>
<dbReference type="KEGG" id="cau:Caur_2698"/>
<dbReference type="PATRIC" id="fig|324602.8.peg.3041"/>
<dbReference type="eggNOG" id="COG0792">
    <property type="taxonomic scope" value="Bacteria"/>
</dbReference>
<dbReference type="HOGENOM" id="CLU_115353_1_1_0"/>
<dbReference type="InParanoid" id="A9WJJ9"/>
<dbReference type="Proteomes" id="UP000002008">
    <property type="component" value="Chromosome"/>
</dbReference>
<dbReference type="GO" id="GO:0003676">
    <property type="term" value="F:nucleic acid binding"/>
    <property type="evidence" value="ECO:0007669"/>
    <property type="project" value="InterPro"/>
</dbReference>
<dbReference type="CDD" id="cd20736">
    <property type="entry name" value="PoNe_Nuclease"/>
    <property type="match status" value="1"/>
</dbReference>
<dbReference type="Gene3D" id="3.40.1350.10">
    <property type="match status" value="1"/>
</dbReference>
<dbReference type="HAMAP" id="MF_00048">
    <property type="entry name" value="UPF0102"/>
    <property type="match status" value="1"/>
</dbReference>
<dbReference type="InterPro" id="IPR011335">
    <property type="entry name" value="Restrct_endonuc-II-like"/>
</dbReference>
<dbReference type="InterPro" id="IPR011856">
    <property type="entry name" value="tRNA_endonuc-like_dom_sf"/>
</dbReference>
<dbReference type="InterPro" id="IPR003509">
    <property type="entry name" value="UPF0102_YraN-like"/>
</dbReference>
<dbReference type="NCBIfam" id="NF009150">
    <property type="entry name" value="PRK12497.1-3"/>
    <property type="match status" value="1"/>
</dbReference>
<dbReference type="NCBIfam" id="NF009154">
    <property type="entry name" value="PRK12497.3-3"/>
    <property type="match status" value="1"/>
</dbReference>
<dbReference type="NCBIfam" id="NF011271">
    <property type="entry name" value="PRK14678.1"/>
    <property type="match status" value="1"/>
</dbReference>
<dbReference type="NCBIfam" id="TIGR00252">
    <property type="entry name" value="YraN family protein"/>
    <property type="match status" value="1"/>
</dbReference>
<dbReference type="PANTHER" id="PTHR34039">
    <property type="entry name" value="UPF0102 PROTEIN YRAN"/>
    <property type="match status" value="1"/>
</dbReference>
<dbReference type="PANTHER" id="PTHR34039:SF1">
    <property type="entry name" value="UPF0102 PROTEIN YRAN"/>
    <property type="match status" value="1"/>
</dbReference>
<dbReference type="Pfam" id="PF02021">
    <property type="entry name" value="UPF0102"/>
    <property type="match status" value="1"/>
</dbReference>
<dbReference type="SUPFAM" id="SSF52980">
    <property type="entry name" value="Restriction endonuclease-like"/>
    <property type="match status" value="1"/>
</dbReference>
<reference key="1">
    <citation type="journal article" date="2011" name="BMC Genomics">
        <title>Complete genome sequence of the filamentous anoxygenic phototrophic bacterium Chloroflexus aurantiacus.</title>
        <authorList>
            <person name="Tang K.H."/>
            <person name="Barry K."/>
            <person name="Chertkov O."/>
            <person name="Dalin E."/>
            <person name="Han C.S."/>
            <person name="Hauser L.J."/>
            <person name="Honchak B.M."/>
            <person name="Karbach L.E."/>
            <person name="Land M.L."/>
            <person name="Lapidus A."/>
            <person name="Larimer F.W."/>
            <person name="Mikhailova N."/>
            <person name="Pitluck S."/>
            <person name="Pierson B.K."/>
            <person name="Blankenship R.E."/>
        </authorList>
    </citation>
    <scope>NUCLEOTIDE SEQUENCE [LARGE SCALE GENOMIC DNA]</scope>
    <source>
        <strain>ATCC 29366 / DSM 635 / J-10-fl</strain>
    </source>
</reference>
<evidence type="ECO:0000255" key="1">
    <source>
        <dbReference type="HAMAP-Rule" id="MF_00048"/>
    </source>
</evidence>
<organism>
    <name type="scientific">Chloroflexus aurantiacus (strain ATCC 29366 / DSM 635 / J-10-fl)</name>
    <dbReference type="NCBI Taxonomy" id="324602"/>
    <lineage>
        <taxon>Bacteria</taxon>
        <taxon>Bacillati</taxon>
        <taxon>Chloroflexota</taxon>
        <taxon>Chloroflexia</taxon>
        <taxon>Chloroflexales</taxon>
        <taxon>Chloroflexineae</taxon>
        <taxon>Chloroflexaceae</taxon>
        <taxon>Chloroflexus</taxon>
    </lineage>
</organism>